<protein>
    <recommendedName>
        <fullName evidence="1">Translational regulator CsrA</fullName>
    </recommendedName>
</protein>
<reference key="1">
    <citation type="journal article" date="2003" name="Proc. Natl. Acad. Sci. U.S.A.">
        <title>Complete genome sequence and analysis of Wolinella succinogenes.</title>
        <authorList>
            <person name="Baar C."/>
            <person name="Eppinger M."/>
            <person name="Raddatz G."/>
            <person name="Simon J."/>
            <person name="Lanz C."/>
            <person name="Klimmek O."/>
            <person name="Nandakumar R."/>
            <person name="Gross R."/>
            <person name="Rosinus A."/>
            <person name="Keller H."/>
            <person name="Jagtap P."/>
            <person name="Linke B."/>
            <person name="Meyer F."/>
            <person name="Lederer H."/>
            <person name="Schuster S.C."/>
        </authorList>
    </citation>
    <scope>NUCLEOTIDE SEQUENCE [LARGE SCALE GENOMIC DNA]</scope>
    <source>
        <strain>ATCC 29543 / DSM 1740 / CCUG 13145 / JCM 31913 / LMG 7466 / NCTC 11488 / FDC 602W</strain>
    </source>
</reference>
<dbReference type="EMBL" id="BX571659">
    <property type="protein sequence ID" value="CAE09987.1"/>
    <property type="molecule type" value="Genomic_DNA"/>
</dbReference>
<dbReference type="RefSeq" id="WP_011138784.1">
    <property type="nucleotide sequence ID" value="NC_005090.1"/>
</dbReference>
<dbReference type="SMR" id="Q7MS14"/>
<dbReference type="STRING" id="273121.WS0879"/>
<dbReference type="KEGG" id="wsu:WS0879"/>
<dbReference type="eggNOG" id="COG1551">
    <property type="taxonomic scope" value="Bacteria"/>
</dbReference>
<dbReference type="HOGENOM" id="CLU_164837_0_0_7"/>
<dbReference type="Proteomes" id="UP000000422">
    <property type="component" value="Chromosome"/>
</dbReference>
<dbReference type="GO" id="GO:0005829">
    <property type="term" value="C:cytosol"/>
    <property type="evidence" value="ECO:0007669"/>
    <property type="project" value="TreeGrafter"/>
</dbReference>
<dbReference type="GO" id="GO:0048027">
    <property type="term" value="F:mRNA 5'-UTR binding"/>
    <property type="evidence" value="ECO:0007669"/>
    <property type="project" value="UniProtKB-UniRule"/>
</dbReference>
<dbReference type="GO" id="GO:0044781">
    <property type="term" value="P:bacterial-type flagellum organization"/>
    <property type="evidence" value="ECO:0007669"/>
    <property type="project" value="UniProtKB-KW"/>
</dbReference>
<dbReference type="GO" id="GO:0006402">
    <property type="term" value="P:mRNA catabolic process"/>
    <property type="evidence" value="ECO:0007669"/>
    <property type="project" value="InterPro"/>
</dbReference>
<dbReference type="GO" id="GO:0045947">
    <property type="term" value="P:negative regulation of translational initiation"/>
    <property type="evidence" value="ECO:0007669"/>
    <property type="project" value="UniProtKB-UniRule"/>
</dbReference>
<dbReference type="GO" id="GO:1902208">
    <property type="term" value="P:regulation of bacterial-type flagellum assembly"/>
    <property type="evidence" value="ECO:0007669"/>
    <property type="project" value="UniProtKB-UniRule"/>
</dbReference>
<dbReference type="GO" id="GO:0006109">
    <property type="term" value="P:regulation of carbohydrate metabolic process"/>
    <property type="evidence" value="ECO:0007669"/>
    <property type="project" value="InterPro"/>
</dbReference>
<dbReference type="FunFam" id="2.60.40.4380:FF:000002">
    <property type="entry name" value="Translational regulator CsrA"/>
    <property type="match status" value="1"/>
</dbReference>
<dbReference type="Gene3D" id="2.60.40.4380">
    <property type="entry name" value="Translational regulator CsrA"/>
    <property type="match status" value="1"/>
</dbReference>
<dbReference type="HAMAP" id="MF_00167">
    <property type="entry name" value="CsrA"/>
    <property type="match status" value="1"/>
</dbReference>
<dbReference type="InterPro" id="IPR003751">
    <property type="entry name" value="CsrA"/>
</dbReference>
<dbReference type="InterPro" id="IPR036107">
    <property type="entry name" value="CsrA_sf"/>
</dbReference>
<dbReference type="NCBIfam" id="TIGR00202">
    <property type="entry name" value="csrA"/>
    <property type="match status" value="1"/>
</dbReference>
<dbReference type="NCBIfam" id="NF001844">
    <property type="entry name" value="PRK00568.1"/>
    <property type="match status" value="1"/>
</dbReference>
<dbReference type="PANTHER" id="PTHR34984">
    <property type="entry name" value="CARBON STORAGE REGULATOR"/>
    <property type="match status" value="1"/>
</dbReference>
<dbReference type="PANTHER" id="PTHR34984:SF1">
    <property type="entry name" value="CARBON STORAGE REGULATOR"/>
    <property type="match status" value="1"/>
</dbReference>
<dbReference type="Pfam" id="PF02599">
    <property type="entry name" value="CsrA"/>
    <property type="match status" value="1"/>
</dbReference>
<dbReference type="SUPFAM" id="SSF117130">
    <property type="entry name" value="CsrA-like"/>
    <property type="match status" value="1"/>
</dbReference>
<name>CSRA_WOLSU</name>
<accession>Q7MS14</accession>
<gene>
    <name evidence="1" type="primary">csrA</name>
    <name type="ordered locus">WS0879</name>
</gene>
<evidence type="ECO:0000255" key="1">
    <source>
        <dbReference type="HAMAP-Rule" id="MF_00167"/>
    </source>
</evidence>
<feature type="chain" id="PRO_0000177099" description="Translational regulator CsrA">
    <location>
        <begin position="1"/>
        <end position="76"/>
    </location>
</feature>
<sequence>MLILSRKEEESIVIGDEIVIKVVSIDKGSVKLGFEAPPHMLILREELKKAVADENLKASAQSDEIALTSLSQKLKK</sequence>
<organism>
    <name type="scientific">Wolinella succinogenes (strain ATCC 29543 / DSM 1740 / CCUG 13145 / JCM 31913 / LMG 7466 / NCTC 11488 / FDC 602W)</name>
    <name type="common">Vibrio succinogenes</name>
    <dbReference type="NCBI Taxonomy" id="273121"/>
    <lineage>
        <taxon>Bacteria</taxon>
        <taxon>Pseudomonadati</taxon>
        <taxon>Campylobacterota</taxon>
        <taxon>Epsilonproteobacteria</taxon>
        <taxon>Campylobacterales</taxon>
        <taxon>Helicobacteraceae</taxon>
        <taxon>Wolinella</taxon>
    </lineage>
</organism>
<proteinExistence type="inferred from homology"/>
<keyword id="KW-1005">Bacterial flagellum biogenesis</keyword>
<keyword id="KW-0963">Cytoplasm</keyword>
<keyword id="KW-1185">Reference proteome</keyword>
<keyword id="KW-0678">Repressor</keyword>
<keyword id="KW-0694">RNA-binding</keyword>
<keyword id="KW-0810">Translation regulation</keyword>
<comment type="function">
    <text evidence="1">A translational regulator that binds mRNA to regulate translation initiation and/or mRNA stability. Usually binds in the 5'-UTR at or near the Shine-Dalgarno sequence preventing ribosome-binding, thus repressing translation. Its main target seems to be the major flagellin gene, while its function is anatagonized by FliW.</text>
</comment>
<comment type="subunit">
    <text evidence="1">Homodimer; the beta-strands of each monomer intercalate to form a hydrophobic core, while the alpha-helices form wings that extend away from the core.</text>
</comment>
<comment type="subcellular location">
    <subcellularLocation>
        <location evidence="1">Cytoplasm</location>
    </subcellularLocation>
</comment>
<comment type="similarity">
    <text evidence="1">Belongs to the CsrA/RsmA family.</text>
</comment>